<comment type="similarity">
    <text evidence="1">Belongs to the UPF0251 family.</text>
</comment>
<sequence length="117" mass="13202">MPRPYKCRRISEIPKVAYYKPAGIPLSLLEENQLSTEEAEALRLKDLLGLEQAEAARQMNISRPTFQRMLYSARYKVADALLKGKALRIEGGVFELDARPCCQRQIPPSQTDPPGQT</sequence>
<organism>
    <name type="scientific">Dehalococcoides mccartyi (strain ATCC BAA-2266 / KCTC 15142 / 195)</name>
    <name type="common">Dehalococcoides ethenogenes (strain 195)</name>
    <dbReference type="NCBI Taxonomy" id="243164"/>
    <lineage>
        <taxon>Bacteria</taxon>
        <taxon>Bacillati</taxon>
        <taxon>Chloroflexota</taxon>
        <taxon>Dehalococcoidia</taxon>
        <taxon>Dehalococcoidales</taxon>
        <taxon>Dehalococcoidaceae</taxon>
        <taxon>Dehalococcoides</taxon>
    </lineage>
</organism>
<accession>Q3Z9Y3</accession>
<proteinExistence type="inferred from homology"/>
<evidence type="ECO:0000255" key="1">
    <source>
        <dbReference type="HAMAP-Rule" id="MF_00674"/>
    </source>
</evidence>
<feature type="chain" id="PRO_1000044746" description="UPF0251 protein DET0218">
    <location>
        <begin position="1"/>
        <end position="117"/>
    </location>
</feature>
<dbReference type="EMBL" id="CP000027">
    <property type="protein sequence ID" value="AAW40499.1"/>
    <property type="molecule type" value="Genomic_DNA"/>
</dbReference>
<dbReference type="RefSeq" id="WP_010936021.1">
    <property type="nucleotide sequence ID" value="NC_002936.3"/>
</dbReference>
<dbReference type="GeneID" id="3230464"/>
<dbReference type="KEGG" id="det:DET0218"/>
<dbReference type="eggNOG" id="COG1342">
    <property type="taxonomic scope" value="Bacteria"/>
</dbReference>
<dbReference type="HOGENOM" id="CLU_094511_1_0_0"/>
<dbReference type="InParanoid" id="Q3Z9Y3"/>
<dbReference type="Proteomes" id="UP000008289">
    <property type="component" value="Chromosome"/>
</dbReference>
<dbReference type="Gene3D" id="1.10.10.10">
    <property type="entry name" value="Winged helix-like DNA-binding domain superfamily/Winged helix DNA-binding domain"/>
    <property type="match status" value="1"/>
</dbReference>
<dbReference type="HAMAP" id="MF_00674">
    <property type="entry name" value="UPF0251"/>
    <property type="match status" value="1"/>
</dbReference>
<dbReference type="InterPro" id="IPR013324">
    <property type="entry name" value="RNA_pol_sigma_r3/r4-like"/>
</dbReference>
<dbReference type="InterPro" id="IPR002852">
    <property type="entry name" value="UPF0251"/>
</dbReference>
<dbReference type="InterPro" id="IPR036388">
    <property type="entry name" value="WH-like_DNA-bd_sf"/>
</dbReference>
<dbReference type="PANTHER" id="PTHR37478">
    <property type="match status" value="1"/>
</dbReference>
<dbReference type="PANTHER" id="PTHR37478:SF2">
    <property type="entry name" value="UPF0251 PROTEIN TK0562"/>
    <property type="match status" value="1"/>
</dbReference>
<dbReference type="Pfam" id="PF02001">
    <property type="entry name" value="DUF134"/>
    <property type="match status" value="1"/>
</dbReference>
<dbReference type="SUPFAM" id="SSF88659">
    <property type="entry name" value="Sigma3 and sigma4 domains of RNA polymerase sigma factors"/>
    <property type="match status" value="1"/>
</dbReference>
<name>Y218_DEHM1</name>
<gene>
    <name type="ordered locus">DET0218</name>
</gene>
<protein>
    <recommendedName>
        <fullName evidence="1">UPF0251 protein DET0218</fullName>
    </recommendedName>
</protein>
<reference key="1">
    <citation type="journal article" date="2005" name="Science">
        <title>Genome sequence of the PCE-dechlorinating bacterium Dehalococcoides ethenogenes.</title>
        <authorList>
            <person name="Seshadri R."/>
            <person name="Adrian L."/>
            <person name="Fouts D.E."/>
            <person name="Eisen J.A."/>
            <person name="Phillippy A.M."/>
            <person name="Methe B.A."/>
            <person name="Ward N.L."/>
            <person name="Nelson W.C."/>
            <person name="DeBoy R.T."/>
            <person name="Khouri H.M."/>
            <person name="Kolonay J.F."/>
            <person name="Dodson R.J."/>
            <person name="Daugherty S.C."/>
            <person name="Brinkac L.M."/>
            <person name="Sullivan S.A."/>
            <person name="Madupu R."/>
            <person name="Nelson K.E."/>
            <person name="Kang K.H."/>
            <person name="Impraim M."/>
            <person name="Tran K."/>
            <person name="Robinson J.M."/>
            <person name="Forberger H.A."/>
            <person name="Fraser C.M."/>
            <person name="Zinder S.H."/>
            <person name="Heidelberg J.F."/>
        </authorList>
    </citation>
    <scope>NUCLEOTIDE SEQUENCE [LARGE SCALE GENOMIC DNA]</scope>
    <source>
        <strain>ATCC BAA-2266 / KCTC 15142 / 195</strain>
    </source>
</reference>